<comment type="catalytic activity">
    <reaction evidence="1">
        <text>tRNA(Lys) + L-lysine + ATP = L-lysyl-tRNA(Lys) + AMP + diphosphate</text>
        <dbReference type="Rhea" id="RHEA:20792"/>
        <dbReference type="Rhea" id="RHEA-COMP:9696"/>
        <dbReference type="Rhea" id="RHEA-COMP:9697"/>
        <dbReference type="ChEBI" id="CHEBI:30616"/>
        <dbReference type="ChEBI" id="CHEBI:32551"/>
        <dbReference type="ChEBI" id="CHEBI:33019"/>
        <dbReference type="ChEBI" id="CHEBI:78442"/>
        <dbReference type="ChEBI" id="CHEBI:78529"/>
        <dbReference type="ChEBI" id="CHEBI:456215"/>
        <dbReference type="EC" id="6.1.1.6"/>
    </reaction>
</comment>
<comment type="cofactor">
    <cofactor evidence="1">
        <name>Mg(2+)</name>
        <dbReference type="ChEBI" id="CHEBI:18420"/>
    </cofactor>
    <text evidence="1">Binds 3 Mg(2+) ions per subunit.</text>
</comment>
<comment type="subunit">
    <text evidence="1">Homodimer.</text>
</comment>
<comment type="subcellular location">
    <subcellularLocation>
        <location evidence="1">Cytoplasm</location>
    </subcellularLocation>
</comment>
<comment type="similarity">
    <text evidence="1">Belongs to the class-II aminoacyl-tRNA synthetase family.</text>
</comment>
<feature type="chain" id="PRO_1000078496" description="Lysine--tRNA ligase">
    <location>
        <begin position="1"/>
        <end position="504"/>
    </location>
</feature>
<feature type="binding site" evidence="1">
    <location>
        <position position="411"/>
    </location>
    <ligand>
        <name>Mg(2+)</name>
        <dbReference type="ChEBI" id="CHEBI:18420"/>
        <label>1</label>
    </ligand>
</feature>
<feature type="binding site" evidence="1">
    <location>
        <position position="418"/>
    </location>
    <ligand>
        <name>Mg(2+)</name>
        <dbReference type="ChEBI" id="CHEBI:18420"/>
        <label>1</label>
    </ligand>
</feature>
<feature type="binding site" evidence="1">
    <location>
        <position position="418"/>
    </location>
    <ligand>
        <name>Mg(2+)</name>
        <dbReference type="ChEBI" id="CHEBI:18420"/>
        <label>2</label>
    </ligand>
</feature>
<organism>
    <name type="scientific">Clostridium botulinum (strain Langeland / NCTC 10281 / Type F)</name>
    <dbReference type="NCBI Taxonomy" id="441772"/>
    <lineage>
        <taxon>Bacteria</taxon>
        <taxon>Bacillati</taxon>
        <taxon>Bacillota</taxon>
        <taxon>Clostridia</taxon>
        <taxon>Eubacteriales</taxon>
        <taxon>Clostridiaceae</taxon>
        <taxon>Clostridium</taxon>
    </lineage>
</organism>
<reference key="1">
    <citation type="submission" date="2007-06" db="EMBL/GenBank/DDBJ databases">
        <authorList>
            <person name="Brinkac L.M."/>
            <person name="Daugherty S."/>
            <person name="Dodson R.J."/>
            <person name="Madupu R."/>
            <person name="Brown J.L."/>
            <person name="Bruce D."/>
            <person name="Detter C."/>
            <person name="Munk C."/>
            <person name="Smith L.A."/>
            <person name="Smith T.J."/>
            <person name="White O."/>
            <person name="Brettin T.S."/>
        </authorList>
    </citation>
    <scope>NUCLEOTIDE SEQUENCE [LARGE SCALE GENOMIC DNA]</scope>
    <source>
        <strain>Langeland / NCTC 10281 / Type F</strain>
    </source>
</reference>
<proteinExistence type="inferred from homology"/>
<dbReference type="EC" id="6.1.1.6" evidence="1"/>
<dbReference type="EMBL" id="CP000728">
    <property type="protein sequence ID" value="ABS41573.1"/>
    <property type="molecule type" value="Genomic_DNA"/>
</dbReference>
<dbReference type="RefSeq" id="WP_003359337.1">
    <property type="nucleotide sequence ID" value="NC_009699.1"/>
</dbReference>
<dbReference type="SMR" id="A7GJB3"/>
<dbReference type="KEGG" id="cbf:CLI_3727"/>
<dbReference type="HOGENOM" id="CLU_008255_6_0_9"/>
<dbReference type="Proteomes" id="UP000002410">
    <property type="component" value="Chromosome"/>
</dbReference>
<dbReference type="GO" id="GO:0005829">
    <property type="term" value="C:cytosol"/>
    <property type="evidence" value="ECO:0007669"/>
    <property type="project" value="TreeGrafter"/>
</dbReference>
<dbReference type="GO" id="GO:0005524">
    <property type="term" value="F:ATP binding"/>
    <property type="evidence" value="ECO:0007669"/>
    <property type="project" value="UniProtKB-UniRule"/>
</dbReference>
<dbReference type="GO" id="GO:0140096">
    <property type="term" value="F:catalytic activity, acting on a protein"/>
    <property type="evidence" value="ECO:0007669"/>
    <property type="project" value="UniProtKB-ARBA"/>
</dbReference>
<dbReference type="GO" id="GO:0004824">
    <property type="term" value="F:lysine-tRNA ligase activity"/>
    <property type="evidence" value="ECO:0007669"/>
    <property type="project" value="UniProtKB-UniRule"/>
</dbReference>
<dbReference type="GO" id="GO:0000287">
    <property type="term" value="F:magnesium ion binding"/>
    <property type="evidence" value="ECO:0007669"/>
    <property type="project" value="UniProtKB-UniRule"/>
</dbReference>
<dbReference type="GO" id="GO:0016740">
    <property type="term" value="F:transferase activity"/>
    <property type="evidence" value="ECO:0007669"/>
    <property type="project" value="UniProtKB-ARBA"/>
</dbReference>
<dbReference type="GO" id="GO:0000049">
    <property type="term" value="F:tRNA binding"/>
    <property type="evidence" value="ECO:0007669"/>
    <property type="project" value="TreeGrafter"/>
</dbReference>
<dbReference type="GO" id="GO:0006430">
    <property type="term" value="P:lysyl-tRNA aminoacylation"/>
    <property type="evidence" value="ECO:0007669"/>
    <property type="project" value="UniProtKB-UniRule"/>
</dbReference>
<dbReference type="CDD" id="cd00775">
    <property type="entry name" value="LysRS_core"/>
    <property type="match status" value="1"/>
</dbReference>
<dbReference type="CDD" id="cd04322">
    <property type="entry name" value="LysRS_N"/>
    <property type="match status" value="1"/>
</dbReference>
<dbReference type="FunFam" id="2.40.50.140:FF:000024">
    <property type="entry name" value="Lysine--tRNA ligase"/>
    <property type="match status" value="1"/>
</dbReference>
<dbReference type="FunFam" id="3.30.930.10:FF:000001">
    <property type="entry name" value="Lysine--tRNA ligase"/>
    <property type="match status" value="1"/>
</dbReference>
<dbReference type="Gene3D" id="3.30.930.10">
    <property type="entry name" value="Bira Bifunctional Protein, Domain 2"/>
    <property type="match status" value="1"/>
</dbReference>
<dbReference type="Gene3D" id="2.40.50.140">
    <property type="entry name" value="Nucleic acid-binding proteins"/>
    <property type="match status" value="1"/>
</dbReference>
<dbReference type="HAMAP" id="MF_00252">
    <property type="entry name" value="Lys_tRNA_synth_class2"/>
    <property type="match status" value="1"/>
</dbReference>
<dbReference type="InterPro" id="IPR004364">
    <property type="entry name" value="Aa-tRNA-synt_II"/>
</dbReference>
<dbReference type="InterPro" id="IPR006195">
    <property type="entry name" value="aa-tRNA-synth_II"/>
</dbReference>
<dbReference type="InterPro" id="IPR045864">
    <property type="entry name" value="aa-tRNA-synth_II/BPL/LPL"/>
</dbReference>
<dbReference type="InterPro" id="IPR002313">
    <property type="entry name" value="Lys-tRNA-ligase_II"/>
</dbReference>
<dbReference type="InterPro" id="IPR034762">
    <property type="entry name" value="Lys-tRNA-ligase_II_bac/euk"/>
</dbReference>
<dbReference type="InterPro" id="IPR044136">
    <property type="entry name" value="Lys-tRNA-ligase_II_N"/>
</dbReference>
<dbReference type="InterPro" id="IPR018149">
    <property type="entry name" value="Lys-tRNA-synth_II_C"/>
</dbReference>
<dbReference type="InterPro" id="IPR012340">
    <property type="entry name" value="NA-bd_OB-fold"/>
</dbReference>
<dbReference type="InterPro" id="IPR004365">
    <property type="entry name" value="NA-bd_OB_tRNA"/>
</dbReference>
<dbReference type="NCBIfam" id="TIGR00499">
    <property type="entry name" value="lysS_bact"/>
    <property type="match status" value="1"/>
</dbReference>
<dbReference type="NCBIfam" id="NF001756">
    <property type="entry name" value="PRK00484.1"/>
    <property type="match status" value="1"/>
</dbReference>
<dbReference type="PANTHER" id="PTHR42918:SF15">
    <property type="entry name" value="LYSINE--TRNA LIGASE, CHLOROPLASTIC_MITOCHONDRIAL"/>
    <property type="match status" value="1"/>
</dbReference>
<dbReference type="PANTHER" id="PTHR42918">
    <property type="entry name" value="LYSYL-TRNA SYNTHETASE"/>
    <property type="match status" value="1"/>
</dbReference>
<dbReference type="Pfam" id="PF00152">
    <property type="entry name" value="tRNA-synt_2"/>
    <property type="match status" value="1"/>
</dbReference>
<dbReference type="Pfam" id="PF01336">
    <property type="entry name" value="tRNA_anti-codon"/>
    <property type="match status" value="1"/>
</dbReference>
<dbReference type="PIRSF" id="PIRSF039101">
    <property type="entry name" value="LysRS2"/>
    <property type="match status" value="1"/>
</dbReference>
<dbReference type="PRINTS" id="PR00982">
    <property type="entry name" value="TRNASYNTHLYS"/>
</dbReference>
<dbReference type="SUPFAM" id="SSF55681">
    <property type="entry name" value="Class II aaRS and biotin synthetases"/>
    <property type="match status" value="1"/>
</dbReference>
<dbReference type="SUPFAM" id="SSF50249">
    <property type="entry name" value="Nucleic acid-binding proteins"/>
    <property type="match status" value="1"/>
</dbReference>
<dbReference type="PROSITE" id="PS50862">
    <property type="entry name" value="AA_TRNA_LIGASE_II"/>
    <property type="match status" value="1"/>
</dbReference>
<evidence type="ECO:0000255" key="1">
    <source>
        <dbReference type="HAMAP-Rule" id="MF_00252"/>
    </source>
</evidence>
<name>SYK_CLOBL</name>
<protein>
    <recommendedName>
        <fullName evidence="1">Lysine--tRNA ligase</fullName>
        <ecNumber evidence="1">6.1.1.6</ecNumber>
    </recommendedName>
    <alternativeName>
        <fullName evidence="1">Lysyl-tRNA synthetase</fullName>
        <shortName evidence="1">LysRS</shortName>
    </alternativeName>
</protein>
<sequence>MSKEDNVINSFEEQANELMKERFQKLKELQSNGKDPFDVYKVERTHTSKEVKDNYEDLEGKTVTVAGRLMSKRVHGKAGFSDIHDRYGKIQLYIKINDVGEEKLKEYKTFDIGDIISVTGTVFKTKTGETSIHITDFQLVCKSLRPLPEKWHGLKDPDLRYRQRYVDLIINQDVRDTFIKRTAIIKSMREFLDNRGFLEVETPILSPIAGGAAAKPFITHHNALDIDMYLRIATELYLKRLIVGGFEKVYEIGKNFRNEGIDIRHNPEFTAIELYEAYADYNDMMEITENMIAYICEKVLGTTKVEYEGAEIDFTPPWRRLTMVDAVKEYAGVDFNIIKNDIEARTIAKEKHIEFKKELKDCTKGDVLIGLFEEFCEDKLMQPTFICDYPVENSPLTKKKRGNEAFTERFEGFVFGREVCNAYSELNDSIVQKERFMQQLKERELGDDEAYMMDDDFITSLEVGMPPTGGLGIGIDRLIMFLTDTHSIRDVILFPTMKPQPNNQ</sequence>
<accession>A7GJB3</accession>
<gene>
    <name evidence="1" type="primary">lysS</name>
    <name type="ordered locus">CLI_3727</name>
</gene>
<keyword id="KW-0030">Aminoacyl-tRNA synthetase</keyword>
<keyword id="KW-0067">ATP-binding</keyword>
<keyword id="KW-0963">Cytoplasm</keyword>
<keyword id="KW-0436">Ligase</keyword>
<keyword id="KW-0460">Magnesium</keyword>
<keyword id="KW-0479">Metal-binding</keyword>
<keyword id="KW-0547">Nucleotide-binding</keyword>
<keyword id="KW-0648">Protein biosynthesis</keyword>